<accession>B7J444</accession>
<reference key="1">
    <citation type="journal article" date="2008" name="BMC Genomics">
        <title>Acidithiobacillus ferrooxidans metabolism: from genome sequence to industrial applications.</title>
        <authorList>
            <person name="Valdes J."/>
            <person name="Pedroso I."/>
            <person name="Quatrini R."/>
            <person name="Dodson R.J."/>
            <person name="Tettelin H."/>
            <person name="Blake R. II"/>
            <person name="Eisen J.A."/>
            <person name="Holmes D.S."/>
        </authorList>
    </citation>
    <scope>NUCLEOTIDE SEQUENCE [LARGE SCALE GENOMIC DNA]</scope>
    <source>
        <strain>ATCC 23270 / DSM 14882 / CIP 104768 / NCIMB 8455</strain>
    </source>
</reference>
<proteinExistence type="inferred from homology"/>
<evidence type="ECO:0000255" key="1">
    <source>
        <dbReference type="HAMAP-Rule" id="MF_00178"/>
    </source>
</evidence>
<organism>
    <name type="scientific">Acidithiobacillus ferrooxidans (strain ATCC 23270 / DSM 14882 / CIP 104768 / NCIMB 8455)</name>
    <name type="common">Ferrobacillus ferrooxidans (strain ATCC 23270)</name>
    <dbReference type="NCBI Taxonomy" id="243159"/>
    <lineage>
        <taxon>Bacteria</taxon>
        <taxon>Pseudomonadati</taxon>
        <taxon>Pseudomonadota</taxon>
        <taxon>Acidithiobacillia</taxon>
        <taxon>Acidithiobacillales</taxon>
        <taxon>Acidithiobacillaceae</taxon>
        <taxon>Acidithiobacillus</taxon>
    </lineage>
</organism>
<gene>
    <name evidence="1" type="primary">ribH</name>
    <name type="ordered locus">AFE_0300</name>
</gene>
<feature type="chain" id="PRO_1000195448" description="6,7-dimethyl-8-ribityllumazine synthase">
    <location>
        <begin position="1"/>
        <end position="154"/>
    </location>
</feature>
<feature type="active site" description="Proton donor" evidence="1">
    <location>
        <position position="89"/>
    </location>
</feature>
<feature type="binding site" evidence="1">
    <location>
        <position position="23"/>
    </location>
    <ligand>
        <name>5-amino-6-(D-ribitylamino)uracil</name>
        <dbReference type="ChEBI" id="CHEBI:15934"/>
    </ligand>
</feature>
<feature type="binding site" evidence="1">
    <location>
        <begin position="57"/>
        <end position="59"/>
    </location>
    <ligand>
        <name>5-amino-6-(D-ribitylamino)uracil</name>
        <dbReference type="ChEBI" id="CHEBI:15934"/>
    </ligand>
</feature>
<feature type="binding site" evidence="1">
    <location>
        <begin position="81"/>
        <end position="83"/>
    </location>
    <ligand>
        <name>5-amino-6-(D-ribitylamino)uracil</name>
        <dbReference type="ChEBI" id="CHEBI:15934"/>
    </ligand>
</feature>
<feature type="binding site" evidence="1">
    <location>
        <begin position="86"/>
        <end position="87"/>
    </location>
    <ligand>
        <name>(2S)-2-hydroxy-3-oxobutyl phosphate</name>
        <dbReference type="ChEBI" id="CHEBI:58830"/>
    </ligand>
</feature>
<feature type="binding site" evidence="1">
    <location>
        <position position="114"/>
    </location>
    <ligand>
        <name>5-amino-6-(D-ribitylamino)uracil</name>
        <dbReference type="ChEBI" id="CHEBI:15934"/>
    </ligand>
</feature>
<feature type="binding site" evidence="1">
    <location>
        <position position="128"/>
    </location>
    <ligand>
        <name>(2S)-2-hydroxy-3-oxobutyl phosphate</name>
        <dbReference type="ChEBI" id="CHEBI:58830"/>
    </ligand>
</feature>
<protein>
    <recommendedName>
        <fullName evidence="1">6,7-dimethyl-8-ribityllumazine synthase</fullName>
        <shortName evidence="1">DMRL synthase</shortName>
        <shortName evidence="1">LS</shortName>
        <shortName evidence="1">Lumazine synthase</shortName>
        <ecNumber evidence="1">2.5.1.78</ecNumber>
    </recommendedName>
</protein>
<name>RISB_ACIF2</name>
<sequence length="154" mass="16640">MIRHIEGSLQAGEHRFALLVSRFNSFITQQLEQGAIDALRRHGAKEEQLHVVHVPGAYEMPLIAQKLARSGNYDAVLCLGAVIRGGTPHFDYVAAEVSKGVAQVSMDTGVPVIFGVLTTDSIEQAIERAGTKAGNKGFDAAMTALEMVQLLRQI</sequence>
<keyword id="KW-1185">Reference proteome</keyword>
<keyword id="KW-0686">Riboflavin biosynthesis</keyword>
<keyword id="KW-0808">Transferase</keyword>
<dbReference type="EC" id="2.5.1.78" evidence="1"/>
<dbReference type="EMBL" id="CP001219">
    <property type="protein sequence ID" value="ACK78084.1"/>
    <property type="molecule type" value="Genomic_DNA"/>
</dbReference>
<dbReference type="SMR" id="B7J444"/>
<dbReference type="STRING" id="243159.AFE_0300"/>
<dbReference type="PaxDb" id="243159-AFE_0300"/>
<dbReference type="GeneID" id="65279681"/>
<dbReference type="KEGG" id="afr:AFE_0300"/>
<dbReference type="eggNOG" id="COG0054">
    <property type="taxonomic scope" value="Bacteria"/>
</dbReference>
<dbReference type="HOGENOM" id="CLU_089358_1_1_6"/>
<dbReference type="UniPathway" id="UPA00275">
    <property type="reaction ID" value="UER00404"/>
</dbReference>
<dbReference type="Proteomes" id="UP000001362">
    <property type="component" value="Chromosome"/>
</dbReference>
<dbReference type="GO" id="GO:0005829">
    <property type="term" value="C:cytosol"/>
    <property type="evidence" value="ECO:0007669"/>
    <property type="project" value="TreeGrafter"/>
</dbReference>
<dbReference type="GO" id="GO:0009349">
    <property type="term" value="C:riboflavin synthase complex"/>
    <property type="evidence" value="ECO:0007669"/>
    <property type="project" value="InterPro"/>
</dbReference>
<dbReference type="GO" id="GO:0000906">
    <property type="term" value="F:6,7-dimethyl-8-ribityllumazine synthase activity"/>
    <property type="evidence" value="ECO:0007669"/>
    <property type="project" value="UniProtKB-UniRule"/>
</dbReference>
<dbReference type="GO" id="GO:0009231">
    <property type="term" value="P:riboflavin biosynthetic process"/>
    <property type="evidence" value="ECO:0007669"/>
    <property type="project" value="UniProtKB-UniRule"/>
</dbReference>
<dbReference type="CDD" id="cd09209">
    <property type="entry name" value="Lumazine_synthase-I"/>
    <property type="match status" value="1"/>
</dbReference>
<dbReference type="FunFam" id="3.40.50.960:FF:000001">
    <property type="entry name" value="6,7-dimethyl-8-ribityllumazine synthase"/>
    <property type="match status" value="1"/>
</dbReference>
<dbReference type="Gene3D" id="3.40.50.960">
    <property type="entry name" value="Lumazine/riboflavin synthase"/>
    <property type="match status" value="1"/>
</dbReference>
<dbReference type="HAMAP" id="MF_00178">
    <property type="entry name" value="Lumazine_synth"/>
    <property type="match status" value="1"/>
</dbReference>
<dbReference type="InterPro" id="IPR034964">
    <property type="entry name" value="LS"/>
</dbReference>
<dbReference type="InterPro" id="IPR002180">
    <property type="entry name" value="LS/RS"/>
</dbReference>
<dbReference type="InterPro" id="IPR036467">
    <property type="entry name" value="LS/RS_sf"/>
</dbReference>
<dbReference type="NCBIfam" id="TIGR00114">
    <property type="entry name" value="lumazine-synth"/>
    <property type="match status" value="1"/>
</dbReference>
<dbReference type="NCBIfam" id="NF000812">
    <property type="entry name" value="PRK00061.1-4"/>
    <property type="match status" value="1"/>
</dbReference>
<dbReference type="PANTHER" id="PTHR21058:SF0">
    <property type="entry name" value="6,7-DIMETHYL-8-RIBITYLLUMAZINE SYNTHASE"/>
    <property type="match status" value="1"/>
</dbReference>
<dbReference type="PANTHER" id="PTHR21058">
    <property type="entry name" value="6,7-DIMETHYL-8-RIBITYLLUMAZINE SYNTHASE DMRL SYNTHASE LUMAZINE SYNTHASE"/>
    <property type="match status" value="1"/>
</dbReference>
<dbReference type="Pfam" id="PF00885">
    <property type="entry name" value="DMRL_synthase"/>
    <property type="match status" value="1"/>
</dbReference>
<dbReference type="SUPFAM" id="SSF52121">
    <property type="entry name" value="Lumazine synthase"/>
    <property type="match status" value="1"/>
</dbReference>
<comment type="function">
    <text evidence="1">Catalyzes the formation of 6,7-dimethyl-8-ribityllumazine by condensation of 5-amino-6-(D-ribitylamino)uracil with 3,4-dihydroxy-2-butanone 4-phosphate. This is the penultimate step in the biosynthesis of riboflavin.</text>
</comment>
<comment type="catalytic activity">
    <reaction evidence="1">
        <text>(2S)-2-hydroxy-3-oxobutyl phosphate + 5-amino-6-(D-ribitylamino)uracil = 6,7-dimethyl-8-(1-D-ribityl)lumazine + phosphate + 2 H2O + H(+)</text>
        <dbReference type="Rhea" id="RHEA:26152"/>
        <dbReference type="ChEBI" id="CHEBI:15377"/>
        <dbReference type="ChEBI" id="CHEBI:15378"/>
        <dbReference type="ChEBI" id="CHEBI:15934"/>
        <dbReference type="ChEBI" id="CHEBI:43474"/>
        <dbReference type="ChEBI" id="CHEBI:58201"/>
        <dbReference type="ChEBI" id="CHEBI:58830"/>
        <dbReference type="EC" id="2.5.1.78"/>
    </reaction>
</comment>
<comment type="pathway">
    <text evidence="1">Cofactor biosynthesis; riboflavin biosynthesis; riboflavin from 2-hydroxy-3-oxobutyl phosphate and 5-amino-6-(D-ribitylamino)uracil: step 1/2.</text>
</comment>
<comment type="subunit">
    <text evidence="1">Forms an icosahedral capsid composed of 60 subunits, arranged as a dodecamer of pentamers.</text>
</comment>
<comment type="similarity">
    <text evidence="1">Belongs to the DMRL synthase family.</text>
</comment>